<comment type="function">
    <text>The light-harvesting complex (LHC) functions as a light receptor, it captures and delivers excitation energy to photosystems with which it is closely associated.</text>
</comment>
<comment type="cofactor">
    <text evidence="1">Binds at least 14 chlorophylls (8 Chl-a and 6 Chl-b) and carotenoids such as lutein and neoxanthin.</text>
</comment>
<comment type="subunit">
    <text>The LHC complex consists of chlorophyll a-b binding proteins.</text>
</comment>
<comment type="subcellular location">
    <subcellularLocation>
        <location>Plastid</location>
        <location>Chloroplast thylakoid membrane</location>
        <topology>Multi-pass membrane protein</topology>
    </subcellularLocation>
</comment>
<comment type="domain">
    <text>The N-terminus of the protein extends into the stroma where it is involved with adhesion of granal membranes and post-translational modifications; both are believed to mediate the distribution of excitation energy between photosystems I and II.</text>
</comment>
<comment type="PTM">
    <text evidence="1">Photoregulated by reversible phosphorylation of its threonine residues.</text>
</comment>
<comment type="similarity">
    <text evidence="5">Belongs to the light-harvesting chlorophyll a/b-binding (LHC) protein family.</text>
</comment>
<keyword id="KW-0007">Acetylation</keyword>
<keyword id="KW-0148">Chlorophyll</keyword>
<keyword id="KW-0150">Chloroplast</keyword>
<keyword id="KW-0157">Chromophore</keyword>
<keyword id="KW-0460">Magnesium</keyword>
<keyword id="KW-0472">Membrane</keyword>
<keyword id="KW-0479">Metal-binding</keyword>
<keyword id="KW-0597">Phosphoprotein</keyword>
<keyword id="KW-0602">Photosynthesis</keyword>
<keyword id="KW-0603">Photosystem I</keyword>
<keyword id="KW-0604">Photosystem II</keyword>
<keyword id="KW-0934">Plastid</keyword>
<keyword id="KW-0793">Thylakoid</keyword>
<keyword id="KW-0809">Transit peptide</keyword>
<keyword id="KW-0812">Transmembrane</keyword>
<keyword id="KW-1133">Transmembrane helix</keyword>
<reference key="1">
    <citation type="journal article" date="1987" name="Plant Mol. Biol.">
        <title>Molecular characterization of two clusters of genes encoding the type I CAB polypeptides of PSII in Nicotiana plumbaginifolia.</title>
        <authorList>
            <person name="Castresana C."/>
            <person name="Staneloni R."/>
            <person name="Malik V.S."/>
            <person name="Cashmore A.R."/>
        </authorList>
        <dbReference type="AGRICOLA" id="IND92001184"/>
    </citation>
    <scope>NUCLEOTIDE SEQUENCE [GENOMIC DNA]</scope>
</reference>
<name>CB25_NICPL</name>
<organism>
    <name type="scientific">Nicotiana plumbaginifolia</name>
    <name type="common">Leadwort-leaved tobacco</name>
    <name type="synonym">Tex-Mex tobacco</name>
    <dbReference type="NCBI Taxonomy" id="4092"/>
    <lineage>
        <taxon>Eukaryota</taxon>
        <taxon>Viridiplantae</taxon>
        <taxon>Streptophyta</taxon>
        <taxon>Embryophyta</taxon>
        <taxon>Tracheophyta</taxon>
        <taxon>Spermatophyta</taxon>
        <taxon>Magnoliopsida</taxon>
        <taxon>eudicotyledons</taxon>
        <taxon>Gunneridae</taxon>
        <taxon>Pentapetalae</taxon>
        <taxon>asterids</taxon>
        <taxon>lamiids</taxon>
        <taxon>Solanales</taxon>
        <taxon>Solanaceae</taxon>
        <taxon>Nicotianoideae</taxon>
        <taxon>Nicotianeae</taxon>
        <taxon>Nicotiana</taxon>
    </lineage>
</organism>
<protein>
    <recommendedName>
        <fullName>Chlorophyll a-b binding protein E, chloroplastic</fullName>
    </recommendedName>
    <alternativeName>
        <fullName>LHCII type I CAB-E</fullName>
        <shortName>LHCP</shortName>
    </alternativeName>
</protein>
<accession>P12470</accession>
<sequence>MAASTTALSSPFAGKAVKLSPSSSEVTGNGKVTMRKTANKAKPVSSGSPWYGPDRVKYLGPFSGESPSYLTGEFPGDYGWDTAGLSADPETFAKNRELEVIHCRWAMLGALGCVFPELLARNGVKFGEAVWFKAGSQIFSEGGLDYLGNPSLVHAQSILAIWACQVVLMGAVEGYRVAGEPLGEVVDPLYPGGSFDPLGLAEDPEAFAELKVKEIKNGRLAMFSMFGFFVQALVTGKGPLENLADHLADPVNNNAWSYATNFVPGK</sequence>
<feature type="transit peptide" description="Chloroplast" evidence="5">
    <location>
        <begin position="1"/>
        <end position="34"/>
    </location>
</feature>
<feature type="chain" id="PRO_0000003676" description="Chlorophyll a-b binding protein E, chloroplastic">
    <location>
        <begin position="35"/>
        <end position="266"/>
    </location>
</feature>
<feature type="transmembrane region" description="Helical" evidence="4">
    <location>
        <begin position="100"/>
        <end position="120"/>
    </location>
</feature>
<feature type="transmembrane region" description="Helical" evidence="4">
    <location>
        <begin position="152"/>
        <end position="172"/>
    </location>
</feature>
<feature type="transmembrane region" description="Helical" evidence="4">
    <location>
        <begin position="220"/>
        <end position="240"/>
    </location>
</feature>
<feature type="binding site" description="axial binding residue" evidence="3">
    <location>
        <position position="58"/>
    </location>
    <ligand>
        <name>chlorophyll b</name>
        <dbReference type="ChEBI" id="CHEBI:61721"/>
        <label>1</label>
    </ligand>
    <ligandPart>
        <name>Mg</name>
        <dbReference type="ChEBI" id="CHEBI:25107"/>
    </ligandPart>
</feature>
<feature type="binding site" evidence="1">
    <location>
        <position position="80"/>
    </location>
    <ligand>
        <name>chlorophyll a</name>
        <dbReference type="ChEBI" id="CHEBI:58416"/>
        <label>1</label>
    </ligand>
</feature>
<feature type="binding site" evidence="1">
    <location>
        <position position="86"/>
    </location>
    <ligand>
        <name>chlorophyll a</name>
        <dbReference type="ChEBI" id="CHEBI:58416"/>
        <label>1</label>
    </ligand>
</feature>
<feature type="binding site" description="axial binding residue" evidence="3">
    <location>
        <position position="99"/>
    </location>
    <ligand>
        <name>chlorophyll a</name>
        <dbReference type="ChEBI" id="CHEBI:58416"/>
        <label>1</label>
    </ligand>
    <ligandPart>
        <name>Mg</name>
        <dbReference type="ChEBI" id="CHEBI:25107"/>
    </ligandPart>
</feature>
<feature type="binding site" description="axial binding residue" evidence="3">
    <location>
        <position position="102"/>
    </location>
    <ligand>
        <name>chlorophyll a</name>
        <dbReference type="ChEBI" id="CHEBI:58416"/>
        <label>2</label>
    </ligand>
    <ligandPart>
        <name>Mg</name>
        <dbReference type="ChEBI" id="CHEBI:25107"/>
    </ligandPart>
</feature>
<feature type="binding site" evidence="1">
    <location>
        <position position="104"/>
    </location>
    <ligand>
        <name>chlorophyll b</name>
        <dbReference type="ChEBI" id="CHEBI:61721"/>
        <label>2</label>
    </ligand>
</feature>
<feature type="binding site" evidence="1">
    <location>
        <position position="137"/>
    </location>
    <ligand>
        <name>chlorophyll a</name>
        <dbReference type="ChEBI" id="CHEBI:58416"/>
        <label>3</label>
    </ligand>
</feature>
<feature type="binding site" evidence="1">
    <location>
        <position position="147"/>
    </location>
    <ligand>
        <name>chlorophyll a</name>
        <dbReference type="ChEBI" id="CHEBI:58416"/>
        <label>3</label>
    </ligand>
</feature>
<feature type="binding site" description="axial binding residue" evidence="3">
    <location>
        <position position="153"/>
    </location>
    <ligand>
        <name>chlorophyll b</name>
        <dbReference type="ChEBI" id="CHEBI:61721"/>
        <label>2</label>
    </ligand>
    <ligandPart>
        <name>Mg</name>
        <dbReference type="ChEBI" id="CHEBI:25107"/>
    </ligandPart>
</feature>
<feature type="binding site" evidence="1">
    <location>
        <position position="157"/>
    </location>
    <ligand>
        <name>chlorophyll b</name>
        <dbReference type="ChEBI" id="CHEBI:61721"/>
        <label>3</label>
    </ligand>
</feature>
<feature type="binding site" evidence="1">
    <location>
        <position position="165"/>
    </location>
    <ligand>
        <name>chlorophyll b</name>
        <dbReference type="ChEBI" id="CHEBI:61721"/>
        <label>4</label>
    </ligand>
</feature>
<feature type="binding site" evidence="2">
    <location>
        <position position="165"/>
    </location>
    <ligand>
        <name>chlorophyll b</name>
        <dbReference type="ChEBI" id="CHEBI:61721"/>
        <label>5</label>
    </ligand>
</feature>
<feature type="binding site" description="axial binding residue" evidence="3">
    <location>
        <position position="173"/>
    </location>
    <ligand>
        <name>chlorophyll b</name>
        <dbReference type="ChEBI" id="CHEBI:61721"/>
        <label>3</label>
    </ligand>
    <ligandPart>
        <name>Mg</name>
        <dbReference type="ChEBI" id="CHEBI:25107"/>
    </ligandPart>
</feature>
<feature type="binding site" evidence="1">
    <location>
        <position position="176"/>
    </location>
    <ligand>
        <name>chlorophyll b</name>
        <dbReference type="ChEBI" id="CHEBI:61721"/>
        <label>4</label>
    </ligand>
</feature>
<feature type="binding site" evidence="1">
    <location>
        <position position="182"/>
    </location>
    <ligand>
        <name>chlorophyll b</name>
        <dbReference type="ChEBI" id="CHEBI:61721"/>
        <label>2</label>
    </ligand>
</feature>
<feature type="binding site" evidence="1">
    <location>
        <position position="213"/>
    </location>
    <ligand>
        <name>chlorophyll a</name>
        <dbReference type="ChEBI" id="CHEBI:58416"/>
        <label>5</label>
    </ligand>
</feature>
<feature type="binding site" description="axial binding residue" evidence="3">
    <location>
        <position position="214"/>
    </location>
    <ligand>
        <name>chlorophyll a</name>
        <dbReference type="ChEBI" id="CHEBI:58416"/>
        <label>3</label>
    </ligand>
    <ligandPart>
        <name>Mg</name>
        <dbReference type="ChEBI" id="CHEBI:25107"/>
    </ligandPart>
</feature>
<feature type="binding site" description="axial binding residue" evidence="3">
    <location>
        <position position="217"/>
    </location>
    <ligand>
        <name>chlorophyll a</name>
        <dbReference type="ChEBI" id="CHEBI:58416"/>
        <label>4</label>
    </ligand>
    <ligandPart>
        <name>Mg</name>
        <dbReference type="ChEBI" id="CHEBI:25107"/>
    </ligandPart>
</feature>
<feature type="binding site" evidence="1">
    <location>
        <position position="219"/>
    </location>
    <ligand>
        <name>chlorophyll a</name>
        <dbReference type="ChEBI" id="CHEBI:58416"/>
        <label>1</label>
    </ligand>
</feature>
<feature type="binding site" description="axial binding residue" evidence="3">
    <location>
        <position position="231"/>
    </location>
    <ligand>
        <name>chlorophyll a</name>
        <dbReference type="ChEBI" id="CHEBI:58416"/>
        <label>5</label>
    </ligand>
    <ligandPart>
        <name>Mg</name>
        <dbReference type="ChEBI" id="CHEBI:25107"/>
    </ligandPart>
</feature>
<feature type="binding site" description="axial binding residue" evidence="3">
    <location>
        <position position="246"/>
    </location>
    <ligand>
        <name>chlorophyll a</name>
        <dbReference type="ChEBI" id="CHEBI:58416"/>
        <label>6</label>
    </ligand>
    <ligandPart>
        <name>Mg</name>
        <dbReference type="ChEBI" id="CHEBI:25107"/>
    </ligandPart>
</feature>
<feature type="binding site" evidence="1">
    <location>
        <position position="255"/>
    </location>
    <ligand>
        <name>chlorophyll a</name>
        <dbReference type="ChEBI" id="CHEBI:58416"/>
        <label>6</label>
    </ligand>
</feature>
<feature type="binding site" evidence="1">
    <location>
        <position position="262"/>
    </location>
    <ligand>
        <name>chlorophyll b</name>
        <dbReference type="ChEBI" id="CHEBI:61721"/>
        <label>5</label>
    </ligand>
</feature>
<feature type="modified residue" description="N2-acetylarginine" evidence="1">
    <location>
        <position position="35"/>
    </location>
</feature>
<feature type="modified residue" description="Phosphothreonine" evidence="1">
    <location>
        <position position="37"/>
    </location>
</feature>
<gene>
    <name type="primary">CABE</name>
</gene>
<evidence type="ECO:0000250" key="1"/>
<evidence type="ECO:0000250" key="2">
    <source>
        <dbReference type="UniProtKB" id="P07371"/>
    </source>
</evidence>
<evidence type="ECO:0000250" key="3">
    <source>
        <dbReference type="UniProtKB" id="P12333"/>
    </source>
</evidence>
<evidence type="ECO:0000255" key="4"/>
<evidence type="ECO:0000305" key="5"/>
<dbReference type="EMBL" id="M21398">
    <property type="protein sequence ID" value="AAA34056.1"/>
    <property type="molecule type" value="Genomic_DNA"/>
</dbReference>
<dbReference type="PIR" id="S07404">
    <property type="entry name" value="CDNTEC"/>
</dbReference>
<dbReference type="SMR" id="P12470"/>
<dbReference type="GO" id="GO:0009535">
    <property type="term" value="C:chloroplast thylakoid membrane"/>
    <property type="evidence" value="ECO:0007669"/>
    <property type="project" value="UniProtKB-SubCell"/>
</dbReference>
<dbReference type="GO" id="GO:0009522">
    <property type="term" value="C:photosystem I"/>
    <property type="evidence" value="ECO:0007669"/>
    <property type="project" value="UniProtKB-KW"/>
</dbReference>
<dbReference type="GO" id="GO:0009523">
    <property type="term" value="C:photosystem II"/>
    <property type="evidence" value="ECO:0007669"/>
    <property type="project" value="UniProtKB-KW"/>
</dbReference>
<dbReference type="GO" id="GO:0016168">
    <property type="term" value="F:chlorophyll binding"/>
    <property type="evidence" value="ECO:0007669"/>
    <property type="project" value="UniProtKB-KW"/>
</dbReference>
<dbReference type="GO" id="GO:0046872">
    <property type="term" value="F:metal ion binding"/>
    <property type="evidence" value="ECO:0007669"/>
    <property type="project" value="UniProtKB-KW"/>
</dbReference>
<dbReference type="GO" id="GO:0009765">
    <property type="term" value="P:photosynthesis, light harvesting"/>
    <property type="evidence" value="ECO:0007669"/>
    <property type="project" value="InterPro"/>
</dbReference>
<dbReference type="FunFam" id="1.10.3460.10:FF:000001">
    <property type="entry name" value="Chlorophyll a-b binding protein, chloroplastic"/>
    <property type="match status" value="1"/>
</dbReference>
<dbReference type="Gene3D" id="1.10.3460.10">
    <property type="entry name" value="Chlorophyll a/b binding protein domain"/>
    <property type="match status" value="1"/>
</dbReference>
<dbReference type="InterPro" id="IPR001344">
    <property type="entry name" value="Chloro_AB-bd_pln"/>
</dbReference>
<dbReference type="InterPro" id="IPR022796">
    <property type="entry name" value="Chloroa_b-bind"/>
</dbReference>
<dbReference type="PANTHER" id="PTHR21649">
    <property type="entry name" value="CHLOROPHYLL A/B BINDING PROTEIN"/>
    <property type="match status" value="1"/>
</dbReference>
<dbReference type="Pfam" id="PF00504">
    <property type="entry name" value="Chloroa_b-bind"/>
    <property type="match status" value="1"/>
</dbReference>
<dbReference type="SUPFAM" id="SSF103511">
    <property type="entry name" value="Chlorophyll a-b binding protein"/>
    <property type="match status" value="1"/>
</dbReference>
<proteinExistence type="inferred from homology"/>